<dbReference type="EC" id="7.1.1.-" evidence="1"/>
<dbReference type="EMBL" id="DQ898156">
    <property type="protein sequence ID" value="ABI32480.1"/>
    <property type="molecule type" value="Genomic_DNA"/>
</dbReference>
<dbReference type="RefSeq" id="YP_740173.1">
    <property type="nucleotide sequence ID" value="NC_008325.1"/>
</dbReference>
<dbReference type="SMR" id="Q0G9Q6"/>
<dbReference type="GeneID" id="4266816"/>
<dbReference type="OMA" id="TRMDYLT"/>
<dbReference type="GO" id="GO:0009535">
    <property type="term" value="C:chloroplast thylakoid membrane"/>
    <property type="evidence" value="ECO:0007669"/>
    <property type="project" value="UniProtKB-SubCell"/>
</dbReference>
<dbReference type="GO" id="GO:0051287">
    <property type="term" value="F:NAD binding"/>
    <property type="evidence" value="ECO:0007669"/>
    <property type="project" value="InterPro"/>
</dbReference>
<dbReference type="GO" id="GO:0016655">
    <property type="term" value="F:oxidoreductase activity, acting on NAD(P)H, quinone or similar compound as acceptor"/>
    <property type="evidence" value="ECO:0007669"/>
    <property type="project" value="UniProtKB-UniRule"/>
</dbReference>
<dbReference type="GO" id="GO:0048038">
    <property type="term" value="F:quinone binding"/>
    <property type="evidence" value="ECO:0007669"/>
    <property type="project" value="UniProtKB-KW"/>
</dbReference>
<dbReference type="GO" id="GO:0019684">
    <property type="term" value="P:photosynthesis, light reaction"/>
    <property type="evidence" value="ECO:0007669"/>
    <property type="project" value="UniProtKB-UniRule"/>
</dbReference>
<dbReference type="FunFam" id="1.10.645.10:FF:000003">
    <property type="entry name" value="NAD(P)H-quinone oxidoreductase subunit H, chloroplastic"/>
    <property type="match status" value="1"/>
</dbReference>
<dbReference type="Gene3D" id="1.10.645.10">
    <property type="entry name" value="Cytochrome-c3 Hydrogenase, chain B"/>
    <property type="match status" value="1"/>
</dbReference>
<dbReference type="HAMAP" id="MF_01358">
    <property type="entry name" value="NDH1_NuoD"/>
    <property type="match status" value="1"/>
</dbReference>
<dbReference type="InterPro" id="IPR001135">
    <property type="entry name" value="NADH_Q_OxRdtase_suD"/>
</dbReference>
<dbReference type="InterPro" id="IPR014029">
    <property type="entry name" value="NADH_UbQ_OxRdtase_49kDa_CS"/>
</dbReference>
<dbReference type="InterPro" id="IPR022885">
    <property type="entry name" value="NDH1_su_D/H"/>
</dbReference>
<dbReference type="InterPro" id="IPR029014">
    <property type="entry name" value="NiFe-Hase_large"/>
</dbReference>
<dbReference type="NCBIfam" id="NF004739">
    <property type="entry name" value="PRK06075.1"/>
    <property type="match status" value="1"/>
</dbReference>
<dbReference type="NCBIfam" id="NF005649">
    <property type="entry name" value="PRK07415.1"/>
    <property type="match status" value="1"/>
</dbReference>
<dbReference type="PANTHER" id="PTHR11993:SF10">
    <property type="entry name" value="NADH DEHYDROGENASE [UBIQUINONE] IRON-SULFUR PROTEIN 2, MITOCHONDRIAL"/>
    <property type="match status" value="1"/>
</dbReference>
<dbReference type="PANTHER" id="PTHR11993">
    <property type="entry name" value="NADH-UBIQUINONE OXIDOREDUCTASE 49 KDA SUBUNIT"/>
    <property type="match status" value="1"/>
</dbReference>
<dbReference type="Pfam" id="PF00346">
    <property type="entry name" value="Complex1_49kDa"/>
    <property type="match status" value="1"/>
</dbReference>
<dbReference type="SUPFAM" id="SSF56762">
    <property type="entry name" value="HydB/Nqo4-like"/>
    <property type="match status" value="1"/>
</dbReference>
<dbReference type="PROSITE" id="PS00535">
    <property type="entry name" value="COMPLEX1_49K"/>
    <property type="match status" value="1"/>
</dbReference>
<accession>Q0G9Q6</accession>
<sequence>MTAPATRNDLMIVNMGPQHPSMHGVLRLIVTLDGEDVIDCEPILGYLHRGMEKIAENRTIIQYLPYVTRWDYLATMFTEAITVNAPEQLGNIQVPKRASYIRVIMLELSRIASHLLWLGPFMADIGAQTPFFYIFRERELIYDLFEAATGMRMMHNFFRIGGVAADLPHGWIDKCLDFCDYFLTRVTEYQRLITRNPIFLERVEGVGIIGGEEAINWGLSGPMLRASGIQWDLRKVDHYESYDEFDWGVQWQKEGDSLARYLVRISEMTESVKIIQQALEGITGGPYENLEIRRFDKVWDPEWNDFDYRFISKKPSPTFELSKQELYVRVEAPKGELGIFLIGDKGIFPWRWKIRPPGFINLQILPQLVKRMKLADIMTILGSIDIIMGEVDR</sequence>
<evidence type="ECO:0000255" key="1">
    <source>
        <dbReference type="HAMAP-Rule" id="MF_01358"/>
    </source>
</evidence>
<reference key="1">
    <citation type="journal article" date="2006" name="BMC Genomics">
        <title>Complete plastid genome sequence of Daucus carota: implications for biotechnology and phylogeny of angiosperms.</title>
        <authorList>
            <person name="Ruhlman T."/>
            <person name="Lee S.-B."/>
            <person name="Jansen R.K."/>
            <person name="Hostetler J.B."/>
            <person name="Tallon L.J."/>
            <person name="Town C.D."/>
            <person name="Daniell H."/>
        </authorList>
    </citation>
    <scope>NUCLEOTIDE SEQUENCE [LARGE SCALE GENOMIC DNA]</scope>
    <source>
        <strain>cv. Danvers Half-long</strain>
    </source>
</reference>
<gene>
    <name evidence="1" type="primary">ndhH</name>
</gene>
<proteinExistence type="inferred from homology"/>
<geneLocation type="chloroplast"/>
<keyword id="KW-0150">Chloroplast</keyword>
<keyword id="KW-0472">Membrane</keyword>
<keyword id="KW-0520">NAD</keyword>
<keyword id="KW-0521">NADP</keyword>
<keyword id="KW-0934">Plastid</keyword>
<keyword id="KW-0618">Plastoquinone</keyword>
<keyword id="KW-0874">Quinone</keyword>
<keyword id="KW-0793">Thylakoid</keyword>
<keyword id="KW-1278">Translocase</keyword>
<keyword id="KW-0813">Transport</keyword>
<feature type="chain" id="PRO_0000357984" description="NAD(P)H-quinone oxidoreductase subunit H, chloroplastic">
    <location>
        <begin position="1"/>
        <end position="393"/>
    </location>
</feature>
<name>NDHH_DAUCA</name>
<comment type="function">
    <text evidence="1">NDH shuttles electrons from NAD(P)H:plastoquinone, via FMN and iron-sulfur (Fe-S) centers, to quinones in the photosynthetic chain and possibly in a chloroplast respiratory chain. The immediate electron acceptor for the enzyme in this species is believed to be plastoquinone. Couples the redox reaction to proton translocation, and thus conserves the redox energy in a proton gradient.</text>
</comment>
<comment type="catalytic activity">
    <reaction evidence="1">
        <text>a plastoquinone + NADH + (n+1) H(+)(in) = a plastoquinol + NAD(+) + n H(+)(out)</text>
        <dbReference type="Rhea" id="RHEA:42608"/>
        <dbReference type="Rhea" id="RHEA-COMP:9561"/>
        <dbReference type="Rhea" id="RHEA-COMP:9562"/>
        <dbReference type="ChEBI" id="CHEBI:15378"/>
        <dbReference type="ChEBI" id="CHEBI:17757"/>
        <dbReference type="ChEBI" id="CHEBI:57540"/>
        <dbReference type="ChEBI" id="CHEBI:57945"/>
        <dbReference type="ChEBI" id="CHEBI:62192"/>
    </reaction>
</comment>
<comment type="catalytic activity">
    <reaction evidence="1">
        <text>a plastoquinone + NADPH + (n+1) H(+)(in) = a plastoquinol + NADP(+) + n H(+)(out)</text>
        <dbReference type="Rhea" id="RHEA:42612"/>
        <dbReference type="Rhea" id="RHEA-COMP:9561"/>
        <dbReference type="Rhea" id="RHEA-COMP:9562"/>
        <dbReference type="ChEBI" id="CHEBI:15378"/>
        <dbReference type="ChEBI" id="CHEBI:17757"/>
        <dbReference type="ChEBI" id="CHEBI:57783"/>
        <dbReference type="ChEBI" id="CHEBI:58349"/>
        <dbReference type="ChEBI" id="CHEBI:62192"/>
    </reaction>
</comment>
<comment type="subunit">
    <text evidence="1">NDH is composed of at least 16 different subunits, 5 of which are encoded in the nucleus.</text>
</comment>
<comment type="subcellular location">
    <subcellularLocation>
        <location evidence="1">Plastid</location>
        <location evidence="1">Chloroplast thylakoid membrane</location>
        <topology evidence="1">Peripheral membrane protein</topology>
        <orientation evidence="1">Stromal side</orientation>
    </subcellularLocation>
</comment>
<comment type="similarity">
    <text evidence="1">Belongs to the complex I 49 kDa subunit family.</text>
</comment>
<protein>
    <recommendedName>
        <fullName evidence="1">NAD(P)H-quinone oxidoreductase subunit H, chloroplastic</fullName>
        <ecNumber evidence="1">7.1.1.-</ecNumber>
    </recommendedName>
    <alternativeName>
        <fullName>NAD(P)H dehydrogenase subunit H</fullName>
    </alternativeName>
    <alternativeName>
        <fullName evidence="1">NADH-plastoquinone oxidoreductase 49 kDa subunit</fullName>
    </alternativeName>
    <alternativeName>
        <fullName evidence="1">NADH-plastoquinone oxidoreductase subunit H</fullName>
    </alternativeName>
</protein>
<organism>
    <name type="scientific">Daucus carota</name>
    <name type="common">Wild carrot</name>
    <dbReference type="NCBI Taxonomy" id="4039"/>
    <lineage>
        <taxon>Eukaryota</taxon>
        <taxon>Viridiplantae</taxon>
        <taxon>Streptophyta</taxon>
        <taxon>Embryophyta</taxon>
        <taxon>Tracheophyta</taxon>
        <taxon>Spermatophyta</taxon>
        <taxon>Magnoliopsida</taxon>
        <taxon>eudicotyledons</taxon>
        <taxon>Gunneridae</taxon>
        <taxon>Pentapetalae</taxon>
        <taxon>asterids</taxon>
        <taxon>campanulids</taxon>
        <taxon>Apiales</taxon>
        <taxon>Apiaceae</taxon>
        <taxon>Apioideae</taxon>
        <taxon>Scandiceae</taxon>
        <taxon>Daucinae</taxon>
        <taxon>Daucus</taxon>
        <taxon>Daucus sect. Daucus</taxon>
    </lineage>
</organism>